<reference key="1">
    <citation type="journal article" date="2006" name="Genome Res.">
        <title>Massive genome erosion and functional adaptations provide insights into the symbiotic lifestyle of Sodalis glossinidius in the tsetse host.</title>
        <authorList>
            <person name="Toh H."/>
            <person name="Weiss B.L."/>
            <person name="Perkin S.A.H."/>
            <person name="Yamashita A."/>
            <person name="Oshima K."/>
            <person name="Hattori M."/>
            <person name="Aksoy S."/>
        </authorList>
    </citation>
    <scope>NUCLEOTIDE SEQUENCE [LARGE SCALE GENOMIC DNA]</scope>
    <source>
        <strain>morsitans</strain>
    </source>
</reference>
<keyword id="KW-0004">4Fe-4S</keyword>
<keyword id="KW-0408">Iron</keyword>
<keyword id="KW-0411">Iron-sulfur</keyword>
<keyword id="KW-0414">Isoprene biosynthesis</keyword>
<keyword id="KW-0479">Metal-binding</keyword>
<keyword id="KW-0560">Oxidoreductase</keyword>
<sequence>MHNSAPITRRKSKRIYVGKVLVGDGAPIAVQSMTNTCTTDVAATVQQIQALERVGVDIVRVSVPTMDAAEAFKLIKQQVAVPLVADIHFDYRIALKVAEYGVDCLRINPGNIGNEGRIRSVVDCARDNNIPIRIGVNAGSLERDLQEKYGEPTPEALLESAMRHVDILDRLNFDTFKVSVKASDVFLAVQSYRLLASRIDQPLHLGITEAGGARSGAVKSAIGLGLLLSEGIGDTLRISLAADPVEEVKVGFDILKSLRIRARGINFIACPTCSRQEFDVIGTVNALEQRLEDIVTPMDVSIIGCVVNGPGEALVSTLGVTGGHNKSGYYEDGVRQRERFDNELMIDQLEARIRAKAAMLDENNRITVNLIEK</sequence>
<dbReference type="EC" id="1.17.7.3" evidence="1"/>
<dbReference type="EMBL" id="AP008232">
    <property type="protein sequence ID" value="BAE75035.1"/>
    <property type="molecule type" value="Genomic_DNA"/>
</dbReference>
<dbReference type="RefSeq" id="WP_011411584.1">
    <property type="nucleotide sequence ID" value="NC_007712.1"/>
</dbReference>
<dbReference type="SMR" id="Q2NS40"/>
<dbReference type="STRING" id="343509.SG1760"/>
<dbReference type="KEGG" id="sgl:SG1760"/>
<dbReference type="eggNOG" id="COG0821">
    <property type="taxonomic scope" value="Bacteria"/>
</dbReference>
<dbReference type="HOGENOM" id="CLU_042258_0_0_6"/>
<dbReference type="OrthoDB" id="9803214at2"/>
<dbReference type="BioCyc" id="SGLO343509:SGP1_RS16045-MONOMER"/>
<dbReference type="UniPathway" id="UPA00056">
    <property type="reaction ID" value="UER00096"/>
</dbReference>
<dbReference type="Proteomes" id="UP000001932">
    <property type="component" value="Chromosome"/>
</dbReference>
<dbReference type="GO" id="GO:0051539">
    <property type="term" value="F:4 iron, 4 sulfur cluster binding"/>
    <property type="evidence" value="ECO:0007669"/>
    <property type="project" value="UniProtKB-UniRule"/>
</dbReference>
<dbReference type="GO" id="GO:0046429">
    <property type="term" value="F:4-hydroxy-3-methylbut-2-en-1-yl diphosphate synthase activity (ferredoxin)"/>
    <property type="evidence" value="ECO:0007669"/>
    <property type="project" value="UniProtKB-UniRule"/>
</dbReference>
<dbReference type="GO" id="GO:0141197">
    <property type="term" value="F:4-hydroxy-3-methylbut-2-enyl-diphosphate synthase activity (flavodoxin)"/>
    <property type="evidence" value="ECO:0007669"/>
    <property type="project" value="UniProtKB-EC"/>
</dbReference>
<dbReference type="GO" id="GO:0005506">
    <property type="term" value="F:iron ion binding"/>
    <property type="evidence" value="ECO:0007669"/>
    <property type="project" value="InterPro"/>
</dbReference>
<dbReference type="GO" id="GO:0019288">
    <property type="term" value="P:isopentenyl diphosphate biosynthetic process, methylerythritol 4-phosphate pathway"/>
    <property type="evidence" value="ECO:0007669"/>
    <property type="project" value="UniProtKB-UniRule"/>
</dbReference>
<dbReference type="GO" id="GO:0016114">
    <property type="term" value="P:terpenoid biosynthetic process"/>
    <property type="evidence" value="ECO:0007669"/>
    <property type="project" value="InterPro"/>
</dbReference>
<dbReference type="FunFam" id="3.20.20.20:FF:000001">
    <property type="entry name" value="4-hydroxy-3-methylbut-2-en-1-yl diphosphate synthase (flavodoxin)"/>
    <property type="match status" value="1"/>
</dbReference>
<dbReference type="FunFam" id="3.30.413.10:FF:000002">
    <property type="entry name" value="4-hydroxy-3-methylbut-2-en-1-yl diphosphate synthase (flavodoxin)"/>
    <property type="match status" value="1"/>
</dbReference>
<dbReference type="Gene3D" id="3.20.20.20">
    <property type="entry name" value="Dihydropteroate synthase-like"/>
    <property type="match status" value="1"/>
</dbReference>
<dbReference type="Gene3D" id="3.30.413.10">
    <property type="entry name" value="Sulfite Reductase Hemoprotein, domain 1"/>
    <property type="match status" value="1"/>
</dbReference>
<dbReference type="HAMAP" id="MF_00159">
    <property type="entry name" value="IspG"/>
    <property type="match status" value="1"/>
</dbReference>
<dbReference type="InterPro" id="IPR011005">
    <property type="entry name" value="Dihydropteroate_synth-like_sf"/>
</dbReference>
<dbReference type="InterPro" id="IPR036849">
    <property type="entry name" value="Enolase-like_C_sf"/>
</dbReference>
<dbReference type="InterPro" id="IPR016425">
    <property type="entry name" value="IspG_bac"/>
</dbReference>
<dbReference type="InterPro" id="IPR004588">
    <property type="entry name" value="IspG_bac-typ"/>
</dbReference>
<dbReference type="InterPro" id="IPR045854">
    <property type="entry name" value="NO2/SO3_Rdtase_4Fe4S_sf"/>
</dbReference>
<dbReference type="NCBIfam" id="TIGR00612">
    <property type="entry name" value="ispG_gcpE"/>
    <property type="match status" value="1"/>
</dbReference>
<dbReference type="NCBIfam" id="NF001540">
    <property type="entry name" value="PRK00366.1"/>
    <property type="match status" value="1"/>
</dbReference>
<dbReference type="PANTHER" id="PTHR30454">
    <property type="entry name" value="4-HYDROXY-3-METHYLBUT-2-EN-1-YL DIPHOSPHATE SYNTHASE"/>
    <property type="match status" value="1"/>
</dbReference>
<dbReference type="PANTHER" id="PTHR30454:SF0">
    <property type="entry name" value="4-HYDROXY-3-METHYLBUT-2-EN-1-YL DIPHOSPHATE SYNTHASE (FERREDOXIN), CHLOROPLASTIC"/>
    <property type="match status" value="1"/>
</dbReference>
<dbReference type="Pfam" id="PF04551">
    <property type="entry name" value="GcpE"/>
    <property type="match status" value="1"/>
</dbReference>
<dbReference type="PIRSF" id="PIRSF004640">
    <property type="entry name" value="IspG"/>
    <property type="match status" value="1"/>
</dbReference>
<dbReference type="SUPFAM" id="SSF51604">
    <property type="entry name" value="Enolase C-terminal domain-like"/>
    <property type="match status" value="1"/>
</dbReference>
<dbReference type="SUPFAM" id="SSF56014">
    <property type="entry name" value="Nitrite and sulphite reductase 4Fe-4S domain-like"/>
    <property type="match status" value="1"/>
</dbReference>
<name>ISPG_SODGM</name>
<organism>
    <name type="scientific">Sodalis glossinidius (strain morsitans)</name>
    <dbReference type="NCBI Taxonomy" id="343509"/>
    <lineage>
        <taxon>Bacteria</taxon>
        <taxon>Pseudomonadati</taxon>
        <taxon>Pseudomonadota</taxon>
        <taxon>Gammaproteobacteria</taxon>
        <taxon>Enterobacterales</taxon>
        <taxon>Bruguierivoracaceae</taxon>
        <taxon>Sodalis</taxon>
    </lineage>
</organism>
<feature type="chain" id="PRO_1000011531" description="4-hydroxy-3-methylbut-2-en-1-yl diphosphate synthase (flavodoxin)">
    <location>
        <begin position="1"/>
        <end position="373"/>
    </location>
</feature>
<feature type="binding site" evidence="1">
    <location>
        <position position="270"/>
    </location>
    <ligand>
        <name>[4Fe-4S] cluster</name>
        <dbReference type="ChEBI" id="CHEBI:49883"/>
    </ligand>
</feature>
<feature type="binding site" evidence="1">
    <location>
        <position position="273"/>
    </location>
    <ligand>
        <name>[4Fe-4S] cluster</name>
        <dbReference type="ChEBI" id="CHEBI:49883"/>
    </ligand>
</feature>
<feature type="binding site" evidence="1">
    <location>
        <position position="305"/>
    </location>
    <ligand>
        <name>[4Fe-4S] cluster</name>
        <dbReference type="ChEBI" id="CHEBI:49883"/>
    </ligand>
</feature>
<feature type="binding site" evidence="1">
    <location>
        <position position="312"/>
    </location>
    <ligand>
        <name>[4Fe-4S] cluster</name>
        <dbReference type="ChEBI" id="CHEBI:49883"/>
    </ligand>
</feature>
<proteinExistence type="inferred from homology"/>
<protein>
    <recommendedName>
        <fullName evidence="1">4-hydroxy-3-methylbut-2-en-1-yl diphosphate synthase (flavodoxin)</fullName>
        <ecNumber evidence="1">1.17.7.3</ecNumber>
    </recommendedName>
    <alternativeName>
        <fullName evidence="1">1-hydroxy-2-methyl-2-(E)-butenyl 4-diphosphate synthase</fullName>
    </alternativeName>
</protein>
<comment type="function">
    <text evidence="1">Converts 2C-methyl-D-erythritol 2,4-cyclodiphosphate (ME-2,4cPP) into 1-hydroxy-2-methyl-2-(E)-butenyl 4-diphosphate.</text>
</comment>
<comment type="catalytic activity">
    <reaction evidence="1">
        <text>(2E)-4-hydroxy-3-methylbut-2-enyl diphosphate + oxidized [flavodoxin] + H2O + 2 H(+) = 2-C-methyl-D-erythritol 2,4-cyclic diphosphate + reduced [flavodoxin]</text>
        <dbReference type="Rhea" id="RHEA:43604"/>
        <dbReference type="Rhea" id="RHEA-COMP:10622"/>
        <dbReference type="Rhea" id="RHEA-COMP:10623"/>
        <dbReference type="ChEBI" id="CHEBI:15377"/>
        <dbReference type="ChEBI" id="CHEBI:15378"/>
        <dbReference type="ChEBI" id="CHEBI:57618"/>
        <dbReference type="ChEBI" id="CHEBI:58210"/>
        <dbReference type="ChEBI" id="CHEBI:58483"/>
        <dbReference type="ChEBI" id="CHEBI:128753"/>
        <dbReference type="EC" id="1.17.7.3"/>
    </reaction>
</comment>
<comment type="cofactor">
    <cofactor evidence="1">
        <name>[4Fe-4S] cluster</name>
        <dbReference type="ChEBI" id="CHEBI:49883"/>
    </cofactor>
    <text evidence="1">Binds 1 [4Fe-4S] cluster.</text>
</comment>
<comment type="pathway">
    <text evidence="1">Isoprenoid biosynthesis; isopentenyl diphosphate biosynthesis via DXP pathway; isopentenyl diphosphate from 1-deoxy-D-xylulose 5-phosphate: step 5/6.</text>
</comment>
<comment type="similarity">
    <text evidence="1">Belongs to the IspG family.</text>
</comment>
<gene>
    <name evidence="1" type="primary">ispG</name>
    <name type="ordered locus">SG1760</name>
</gene>
<accession>Q2NS40</accession>
<evidence type="ECO:0000255" key="1">
    <source>
        <dbReference type="HAMAP-Rule" id="MF_00159"/>
    </source>
</evidence>